<dbReference type="EC" id="7.1.2.2" evidence="1"/>
<dbReference type="EMBL" id="CP000961">
    <property type="protein sequence ID" value="ACA89147.1"/>
    <property type="molecule type" value="Genomic_DNA"/>
</dbReference>
<dbReference type="RefSeq" id="WP_012327464.1">
    <property type="nucleotide sequence ID" value="NC_010506.1"/>
</dbReference>
<dbReference type="SMR" id="B1KQ34"/>
<dbReference type="STRING" id="392500.Swoo_4898"/>
<dbReference type="KEGG" id="swd:Swoo_4898"/>
<dbReference type="eggNOG" id="COG0055">
    <property type="taxonomic scope" value="Bacteria"/>
</dbReference>
<dbReference type="HOGENOM" id="CLU_022398_0_2_6"/>
<dbReference type="Proteomes" id="UP000002168">
    <property type="component" value="Chromosome"/>
</dbReference>
<dbReference type="GO" id="GO:0005886">
    <property type="term" value="C:plasma membrane"/>
    <property type="evidence" value="ECO:0007669"/>
    <property type="project" value="UniProtKB-SubCell"/>
</dbReference>
<dbReference type="GO" id="GO:0045259">
    <property type="term" value="C:proton-transporting ATP synthase complex"/>
    <property type="evidence" value="ECO:0007669"/>
    <property type="project" value="UniProtKB-KW"/>
</dbReference>
<dbReference type="GO" id="GO:0005524">
    <property type="term" value="F:ATP binding"/>
    <property type="evidence" value="ECO:0007669"/>
    <property type="project" value="UniProtKB-UniRule"/>
</dbReference>
<dbReference type="GO" id="GO:0016887">
    <property type="term" value="F:ATP hydrolysis activity"/>
    <property type="evidence" value="ECO:0007669"/>
    <property type="project" value="InterPro"/>
</dbReference>
<dbReference type="GO" id="GO:0046933">
    <property type="term" value="F:proton-transporting ATP synthase activity, rotational mechanism"/>
    <property type="evidence" value="ECO:0007669"/>
    <property type="project" value="UniProtKB-UniRule"/>
</dbReference>
<dbReference type="CDD" id="cd18110">
    <property type="entry name" value="ATP-synt_F1_beta_C"/>
    <property type="match status" value="1"/>
</dbReference>
<dbReference type="CDD" id="cd18115">
    <property type="entry name" value="ATP-synt_F1_beta_N"/>
    <property type="match status" value="1"/>
</dbReference>
<dbReference type="CDD" id="cd01133">
    <property type="entry name" value="F1-ATPase_beta_CD"/>
    <property type="match status" value="1"/>
</dbReference>
<dbReference type="FunFam" id="1.10.1140.10:FF:000001">
    <property type="entry name" value="ATP synthase subunit beta"/>
    <property type="match status" value="1"/>
</dbReference>
<dbReference type="FunFam" id="2.40.10.170:FF:000003">
    <property type="entry name" value="ATP synthase subunit beta"/>
    <property type="match status" value="1"/>
</dbReference>
<dbReference type="FunFam" id="3.40.50.300:FF:000004">
    <property type="entry name" value="ATP synthase subunit beta"/>
    <property type="match status" value="1"/>
</dbReference>
<dbReference type="Gene3D" id="2.40.10.170">
    <property type="match status" value="1"/>
</dbReference>
<dbReference type="Gene3D" id="1.10.1140.10">
    <property type="entry name" value="Bovine Mitochondrial F1-atpase, Atp Synthase Beta Chain, Chain D, domain 3"/>
    <property type="match status" value="1"/>
</dbReference>
<dbReference type="Gene3D" id="3.40.50.300">
    <property type="entry name" value="P-loop containing nucleotide triphosphate hydrolases"/>
    <property type="match status" value="1"/>
</dbReference>
<dbReference type="HAMAP" id="MF_01347">
    <property type="entry name" value="ATP_synth_beta_bact"/>
    <property type="match status" value="1"/>
</dbReference>
<dbReference type="InterPro" id="IPR003593">
    <property type="entry name" value="AAA+_ATPase"/>
</dbReference>
<dbReference type="InterPro" id="IPR055190">
    <property type="entry name" value="ATP-synt_VA_C"/>
</dbReference>
<dbReference type="InterPro" id="IPR005722">
    <property type="entry name" value="ATP_synth_F1_bsu"/>
</dbReference>
<dbReference type="InterPro" id="IPR020003">
    <property type="entry name" value="ATPase_a/bsu_AS"/>
</dbReference>
<dbReference type="InterPro" id="IPR050053">
    <property type="entry name" value="ATPase_alpha/beta_chains"/>
</dbReference>
<dbReference type="InterPro" id="IPR004100">
    <property type="entry name" value="ATPase_F1/V1/A1_a/bsu_N"/>
</dbReference>
<dbReference type="InterPro" id="IPR036121">
    <property type="entry name" value="ATPase_F1/V1/A1_a/bsu_N_sf"/>
</dbReference>
<dbReference type="InterPro" id="IPR000194">
    <property type="entry name" value="ATPase_F1/V1/A1_a/bsu_nucl-bd"/>
</dbReference>
<dbReference type="InterPro" id="IPR024034">
    <property type="entry name" value="ATPase_F1/V1_b/a_C"/>
</dbReference>
<dbReference type="InterPro" id="IPR027417">
    <property type="entry name" value="P-loop_NTPase"/>
</dbReference>
<dbReference type="NCBIfam" id="TIGR01039">
    <property type="entry name" value="atpD"/>
    <property type="match status" value="1"/>
</dbReference>
<dbReference type="PANTHER" id="PTHR15184">
    <property type="entry name" value="ATP SYNTHASE"/>
    <property type="match status" value="1"/>
</dbReference>
<dbReference type="PANTHER" id="PTHR15184:SF71">
    <property type="entry name" value="ATP SYNTHASE SUBUNIT BETA, MITOCHONDRIAL"/>
    <property type="match status" value="1"/>
</dbReference>
<dbReference type="Pfam" id="PF00006">
    <property type="entry name" value="ATP-synt_ab"/>
    <property type="match status" value="1"/>
</dbReference>
<dbReference type="Pfam" id="PF02874">
    <property type="entry name" value="ATP-synt_ab_N"/>
    <property type="match status" value="1"/>
</dbReference>
<dbReference type="Pfam" id="PF22919">
    <property type="entry name" value="ATP-synt_VA_C"/>
    <property type="match status" value="1"/>
</dbReference>
<dbReference type="SMART" id="SM00382">
    <property type="entry name" value="AAA"/>
    <property type="match status" value="1"/>
</dbReference>
<dbReference type="SUPFAM" id="SSF47917">
    <property type="entry name" value="C-terminal domain of alpha and beta subunits of F1 ATP synthase"/>
    <property type="match status" value="1"/>
</dbReference>
<dbReference type="SUPFAM" id="SSF50615">
    <property type="entry name" value="N-terminal domain of alpha and beta subunits of F1 ATP synthase"/>
    <property type="match status" value="1"/>
</dbReference>
<dbReference type="SUPFAM" id="SSF52540">
    <property type="entry name" value="P-loop containing nucleoside triphosphate hydrolases"/>
    <property type="match status" value="1"/>
</dbReference>
<dbReference type="PROSITE" id="PS00152">
    <property type="entry name" value="ATPASE_ALPHA_BETA"/>
    <property type="match status" value="1"/>
</dbReference>
<protein>
    <recommendedName>
        <fullName evidence="1">ATP synthase subunit beta</fullName>
        <ecNumber evidence="1">7.1.2.2</ecNumber>
    </recommendedName>
    <alternativeName>
        <fullName evidence="1">ATP synthase F1 sector subunit beta</fullName>
    </alternativeName>
    <alternativeName>
        <fullName evidence="1">F-ATPase subunit beta</fullName>
    </alternativeName>
</protein>
<evidence type="ECO:0000255" key="1">
    <source>
        <dbReference type="HAMAP-Rule" id="MF_01347"/>
    </source>
</evidence>
<organism>
    <name type="scientific">Shewanella woodyi (strain ATCC 51908 / MS32)</name>
    <dbReference type="NCBI Taxonomy" id="392500"/>
    <lineage>
        <taxon>Bacteria</taxon>
        <taxon>Pseudomonadati</taxon>
        <taxon>Pseudomonadota</taxon>
        <taxon>Gammaproteobacteria</taxon>
        <taxon>Alteromonadales</taxon>
        <taxon>Shewanellaceae</taxon>
        <taxon>Shewanella</taxon>
    </lineage>
</organism>
<sequence length="458" mass="49628">MSTGTVVQVIGAVVDVEFPQDAVPQVYDALEIKSEDLVLEVQQQLGGGVVRTIAMGSSDGLRRGLEVVNSGSPISVPVGEKTLGRIMNVLGQPVDEAGEIGEEERYVIHREAPSYEDQSNTTELLETGIKVIDLVCPFAKGGKVGLFGGAGVGKTVNMMELINNIAKAHSGLSVFAGVGERTREGNDFYYEMEDSGVLDKVAMVYGQMNEPPGNRLRVALTGLTMAEKFRDEGKDVLFFVDNIYRYTLAGTEVSALLGRMPSAVGYQPTLAEEMGVLQERITSTKTGSITSVQAVYVPADDLTDPSPATTFAHLDATVVLSRNIASMGIYPAVDPLDSTSRQLDPLVVGQEHYDVANGVQTVLQRYKELKDIIAILGMDELSDEDKTTVSRARKIEKYLSQPFFVAEVFTGSPGKYVSLKDTIRGFKGILEGEYDNLPEQAFYMVGSIDEVVEKANKK</sequence>
<comment type="function">
    <text evidence="1">Produces ATP from ADP in the presence of a proton gradient across the membrane. The catalytic sites are hosted primarily by the beta subunits.</text>
</comment>
<comment type="catalytic activity">
    <reaction evidence="1">
        <text>ATP + H2O + 4 H(+)(in) = ADP + phosphate + 5 H(+)(out)</text>
        <dbReference type="Rhea" id="RHEA:57720"/>
        <dbReference type="ChEBI" id="CHEBI:15377"/>
        <dbReference type="ChEBI" id="CHEBI:15378"/>
        <dbReference type="ChEBI" id="CHEBI:30616"/>
        <dbReference type="ChEBI" id="CHEBI:43474"/>
        <dbReference type="ChEBI" id="CHEBI:456216"/>
        <dbReference type="EC" id="7.1.2.2"/>
    </reaction>
</comment>
<comment type="subunit">
    <text evidence="1">F-type ATPases have 2 components, CF(1) - the catalytic core - and CF(0) - the membrane proton channel. CF(1) has five subunits: alpha(3), beta(3), gamma(1), delta(1), epsilon(1). CF(0) has three main subunits: a(1), b(2) and c(9-12). The alpha and beta chains form an alternating ring which encloses part of the gamma chain. CF(1) is attached to CF(0) by a central stalk formed by the gamma and epsilon chains, while a peripheral stalk is formed by the delta and b chains.</text>
</comment>
<comment type="subcellular location">
    <subcellularLocation>
        <location evidence="1">Cell inner membrane</location>
        <topology evidence="1">Peripheral membrane protein</topology>
    </subcellularLocation>
</comment>
<comment type="similarity">
    <text evidence="1">Belongs to the ATPase alpha/beta chains family.</text>
</comment>
<name>ATPB_SHEWM</name>
<gene>
    <name evidence="1" type="primary">atpD</name>
    <name type="ordered locus">Swoo_4898</name>
</gene>
<proteinExistence type="inferred from homology"/>
<reference key="1">
    <citation type="submission" date="2008-02" db="EMBL/GenBank/DDBJ databases">
        <title>Complete sequence of Shewanella woodyi ATCC 51908.</title>
        <authorList>
            <consortium name="US DOE Joint Genome Institute"/>
            <person name="Copeland A."/>
            <person name="Lucas S."/>
            <person name="Lapidus A."/>
            <person name="Glavina del Rio T."/>
            <person name="Dalin E."/>
            <person name="Tice H."/>
            <person name="Bruce D."/>
            <person name="Goodwin L."/>
            <person name="Pitluck S."/>
            <person name="Sims D."/>
            <person name="Brettin T."/>
            <person name="Detter J.C."/>
            <person name="Han C."/>
            <person name="Kuske C.R."/>
            <person name="Schmutz J."/>
            <person name="Larimer F."/>
            <person name="Land M."/>
            <person name="Hauser L."/>
            <person name="Kyrpides N."/>
            <person name="Lykidis A."/>
            <person name="Zhao J.-S."/>
            <person name="Richardson P."/>
        </authorList>
    </citation>
    <scope>NUCLEOTIDE SEQUENCE [LARGE SCALE GENOMIC DNA]</scope>
    <source>
        <strain>ATCC 51908 / MS32</strain>
    </source>
</reference>
<accession>B1KQ34</accession>
<feature type="chain" id="PRO_1000143546" description="ATP synthase subunit beta">
    <location>
        <begin position="1"/>
        <end position="458"/>
    </location>
</feature>
<feature type="binding site" evidence="1">
    <location>
        <begin position="148"/>
        <end position="155"/>
    </location>
    <ligand>
        <name>ATP</name>
        <dbReference type="ChEBI" id="CHEBI:30616"/>
    </ligand>
</feature>
<keyword id="KW-0066">ATP synthesis</keyword>
<keyword id="KW-0067">ATP-binding</keyword>
<keyword id="KW-0997">Cell inner membrane</keyword>
<keyword id="KW-1003">Cell membrane</keyword>
<keyword id="KW-0139">CF(1)</keyword>
<keyword id="KW-0375">Hydrogen ion transport</keyword>
<keyword id="KW-0406">Ion transport</keyword>
<keyword id="KW-0472">Membrane</keyword>
<keyword id="KW-0547">Nucleotide-binding</keyword>
<keyword id="KW-1185">Reference proteome</keyword>
<keyword id="KW-1278">Translocase</keyword>
<keyword id="KW-0813">Transport</keyword>